<evidence type="ECO:0000250" key="1">
    <source>
        <dbReference type="UniProtKB" id="P06782"/>
    </source>
</evidence>
<evidence type="ECO:0000255" key="2">
    <source>
        <dbReference type="PROSITE-ProRule" id="PRU00159"/>
    </source>
</evidence>
<evidence type="ECO:0000256" key="3">
    <source>
        <dbReference type="SAM" id="MobiDB-lite"/>
    </source>
</evidence>
<evidence type="ECO:0000269" key="4">
    <source>
    </source>
</evidence>
<evidence type="ECO:0000303" key="5">
    <source>
    </source>
</evidence>
<evidence type="ECO:0000305" key="6"/>
<proteinExistence type="inferred from homology"/>
<organism>
    <name type="scientific">Fusarium virguliforme</name>
    <dbReference type="NCBI Taxonomy" id="232082"/>
    <lineage>
        <taxon>Eukaryota</taxon>
        <taxon>Fungi</taxon>
        <taxon>Dikarya</taxon>
        <taxon>Ascomycota</taxon>
        <taxon>Pezizomycotina</taxon>
        <taxon>Sordariomycetes</taxon>
        <taxon>Hypocreomycetidae</taxon>
        <taxon>Hypocreales</taxon>
        <taxon>Nectriaceae</taxon>
        <taxon>Fusarium</taxon>
        <taxon>Fusarium solani species complex</taxon>
    </lineage>
</organism>
<reference key="1">
    <citation type="journal article" date="2014" name="PLoS ONE">
        <title>The genome sequence of the fungal pathogen Fusarium virguliforme that causes sudden death syndrome in soybean.</title>
        <authorList>
            <person name="Srivastava S.K."/>
            <person name="Huang X."/>
            <person name="Brar H.K."/>
            <person name="Fakhoury A.M."/>
            <person name="Bluhm B.H."/>
            <person name="Bhattacharyya M.K."/>
        </authorList>
    </citation>
    <scope>NUCLEOTIDE SEQUENCE [LARGE SCALE GENOMIC DNA]</scope>
    <source>
        <strain>Mont-1</strain>
    </source>
</reference>
<reference key="2">
    <citation type="journal article" date="2017" name="Curr. Genet.">
        <title>FvSNF1, the sucrose non-fermenting protein kinase gene of Fusarium virguliforme, is required for cell-wall-degrading enzymes expression and sudden death syndrome development in soybean.</title>
        <authorList>
            <person name="Islam K.T."/>
            <person name="Bond J.P."/>
            <person name="Fakhoury A.M."/>
        </authorList>
    </citation>
    <scope>FUNCTION</scope>
    <scope>DISRUPTION PHENOTYPE</scope>
    <source>
        <strain>Mont-1</strain>
    </source>
</reference>
<comment type="function">
    <text evidence="1 4">Catalytic subunit of the AMP-activated protein kinase complex also known as the SNF1 kinase complex (Snf1c), a central regulator of cellular energy homeostasis, which, in response to a fall in intracellular ATP levels, activates energy-producing pathways and inhibits energy-consuming processes (By similarity). The complex phosphorylates histone H3 to form H3S10ph, which promotes H3K14ac formation, leading to transcriptional activation through TBP recruitment to the promoters (By similarity). Activates the expression of the galactose oxidase (GOA) gene and of several cell wall-degrading enzymes (CWDEs) such as pectate lyase, xylanase and glucanase (PubMed:28132080). Plays an important role in sudden death syndrome (SDS) by controlling the colonization of the infected roots (PubMed:28132080).</text>
</comment>
<comment type="catalytic activity">
    <reaction evidence="1">
        <text>L-seryl-[protein] + ATP = O-phospho-L-seryl-[protein] + ADP + H(+)</text>
        <dbReference type="Rhea" id="RHEA:17989"/>
        <dbReference type="Rhea" id="RHEA-COMP:9863"/>
        <dbReference type="Rhea" id="RHEA-COMP:11604"/>
        <dbReference type="ChEBI" id="CHEBI:15378"/>
        <dbReference type="ChEBI" id="CHEBI:29999"/>
        <dbReference type="ChEBI" id="CHEBI:30616"/>
        <dbReference type="ChEBI" id="CHEBI:83421"/>
        <dbReference type="ChEBI" id="CHEBI:456216"/>
        <dbReference type="EC" id="2.7.11.1"/>
    </reaction>
</comment>
<comment type="catalytic activity">
    <reaction evidence="1">
        <text>L-threonyl-[protein] + ATP = O-phospho-L-threonyl-[protein] + ADP + H(+)</text>
        <dbReference type="Rhea" id="RHEA:46608"/>
        <dbReference type="Rhea" id="RHEA-COMP:11060"/>
        <dbReference type="Rhea" id="RHEA-COMP:11605"/>
        <dbReference type="ChEBI" id="CHEBI:15378"/>
        <dbReference type="ChEBI" id="CHEBI:30013"/>
        <dbReference type="ChEBI" id="CHEBI:30616"/>
        <dbReference type="ChEBI" id="CHEBI:61977"/>
        <dbReference type="ChEBI" id="CHEBI:456216"/>
        <dbReference type="EC" id="2.7.11.1"/>
    </reaction>
</comment>
<comment type="subunit">
    <text evidence="1">Component of the AMP-activated protein kinase complex also known as the SNF1 kinase complex (Snf1c), a heterotrimeric complex composed of a catalytic subunit alpha and 2 regulatory subunits beta and gamma (By similarity).</text>
</comment>
<comment type="subcellular location">
    <subcellularLocation>
        <location evidence="1">Cytoplasm</location>
    </subcellularLocation>
    <subcellularLocation>
        <location evidence="1">Nucleus</location>
    </subcellularLocation>
    <text evidence="1">Nuclear translocation occurs under nitrogen and glucose starvation conditions (By similarity).</text>
</comment>
<comment type="domain">
    <text evidence="1">The regulatory domain (RS) also called auto-inhibitory domain (AID) inhibits kinase activity of the protein kinase domain (KD) (By similarity).</text>
</comment>
<comment type="domain">
    <text evidence="1">The ubiquitin-associated domain (UBA) localized within the AID dampens kinase activation, probably by restraining alpha-gamma associations (By similarity).</text>
</comment>
<comment type="disruption phenotype">
    <text evidence="4">Impairs the expression of the galactose oxidase gene which abolishes galactose utilization and causes poor growth on xylose, arabinose and sucrose (PubMed:28132080). Impairs severely the ability to cause sudden death syndrome (SDS) on challenged soybean plants through preventing to colonize the xylem vessels and phloem tissue during infection (PubMed:28132080).</text>
</comment>
<comment type="similarity">
    <text evidence="6">Belongs to the protein kinase superfamily. CAMK Ser/Thr protein kinase family. SNF1 subfamily.</text>
</comment>
<keyword id="KW-0067">ATP-binding</keyword>
<keyword id="KW-0119">Carbohydrate metabolism</keyword>
<keyword id="KW-0963">Cytoplasm</keyword>
<keyword id="KW-0418">Kinase</keyword>
<keyword id="KW-0547">Nucleotide-binding</keyword>
<keyword id="KW-0539">Nucleus</keyword>
<keyword id="KW-0723">Serine/threonine-protein kinase</keyword>
<keyword id="KW-0808">Transferase</keyword>
<keyword id="KW-0843">Virulence</keyword>
<accession>P0DP15</accession>
<feature type="chain" id="PRO_0000439650" description="Sucrose non-fermenting protein kinase 1">
    <location>
        <begin position="1"/>
        <end position="698"/>
    </location>
</feature>
<feature type="domain" description="Protein kinase" evidence="2">
    <location>
        <begin position="62"/>
        <end position="313"/>
    </location>
</feature>
<feature type="domain" description="UBA" evidence="1">
    <location>
        <begin position="360"/>
        <end position="397"/>
    </location>
</feature>
<feature type="region of interest" description="Disordered" evidence="3">
    <location>
        <begin position="1"/>
        <end position="48"/>
    </location>
</feature>
<feature type="region of interest" description="Auto-inhibitory domain (AID)" evidence="1">
    <location>
        <begin position="320"/>
        <end position="417"/>
    </location>
</feature>
<feature type="region of interest" description="Disordered" evidence="3">
    <location>
        <begin position="410"/>
        <end position="435"/>
    </location>
</feature>
<feature type="region of interest" description="Disordered" evidence="3">
    <location>
        <begin position="482"/>
        <end position="525"/>
    </location>
</feature>
<feature type="region of interest" description="Disordered" evidence="3">
    <location>
        <begin position="564"/>
        <end position="597"/>
    </location>
</feature>
<feature type="compositionally biased region" description="Low complexity" evidence="3">
    <location>
        <begin position="415"/>
        <end position="435"/>
    </location>
</feature>
<feature type="compositionally biased region" description="Basic and acidic residues" evidence="3">
    <location>
        <begin position="484"/>
        <end position="493"/>
    </location>
</feature>
<feature type="compositionally biased region" description="Basic and acidic residues" evidence="3">
    <location>
        <begin position="564"/>
        <end position="573"/>
    </location>
</feature>
<feature type="active site" description="Proton acceptor" evidence="2">
    <location>
        <position position="184"/>
    </location>
</feature>
<feature type="binding site" evidence="2">
    <location>
        <begin position="68"/>
        <end position="76"/>
    </location>
    <ligand>
        <name>ATP</name>
        <dbReference type="ChEBI" id="CHEBI:30616"/>
    </ligand>
</feature>
<feature type="binding site" evidence="2">
    <location>
        <position position="91"/>
    </location>
    <ligand>
        <name>ATP</name>
        <dbReference type="ChEBI" id="CHEBI:30616"/>
    </ligand>
</feature>
<dbReference type="EC" id="2.7.11.1" evidence="1"/>
<dbReference type="SMR" id="P0DP15"/>
<dbReference type="GO" id="GO:0005737">
    <property type="term" value="C:cytoplasm"/>
    <property type="evidence" value="ECO:0007669"/>
    <property type="project" value="UniProtKB-SubCell"/>
</dbReference>
<dbReference type="GO" id="GO:0005634">
    <property type="term" value="C:nucleus"/>
    <property type="evidence" value="ECO:0007669"/>
    <property type="project" value="UniProtKB-SubCell"/>
</dbReference>
<dbReference type="GO" id="GO:0005524">
    <property type="term" value="F:ATP binding"/>
    <property type="evidence" value="ECO:0007669"/>
    <property type="project" value="UniProtKB-KW"/>
</dbReference>
<dbReference type="GO" id="GO:0106310">
    <property type="term" value="F:protein serine kinase activity"/>
    <property type="evidence" value="ECO:0007669"/>
    <property type="project" value="RHEA"/>
</dbReference>
<dbReference type="GO" id="GO:0004674">
    <property type="term" value="F:protein serine/threonine kinase activity"/>
    <property type="evidence" value="ECO:0007669"/>
    <property type="project" value="UniProtKB-KW"/>
</dbReference>
<dbReference type="GO" id="GO:0035556">
    <property type="term" value="P:intracellular signal transduction"/>
    <property type="evidence" value="ECO:0007669"/>
    <property type="project" value="TreeGrafter"/>
</dbReference>
<dbReference type="CDD" id="cd12122">
    <property type="entry name" value="AMPKA_C"/>
    <property type="match status" value="1"/>
</dbReference>
<dbReference type="CDD" id="cd14079">
    <property type="entry name" value="STKc_AMPK_alpha"/>
    <property type="match status" value="1"/>
</dbReference>
<dbReference type="CDD" id="cd14334">
    <property type="entry name" value="UBA_SNF1_fungi"/>
    <property type="match status" value="1"/>
</dbReference>
<dbReference type="FunFam" id="1.10.510.10:FF:000544">
    <property type="entry name" value="Non-specific serine/threonine protein kinase"/>
    <property type="match status" value="1"/>
</dbReference>
<dbReference type="FunFam" id="1.10.8.10:FF:000069">
    <property type="entry name" value="Non-specific serine/threonine protein kinase"/>
    <property type="match status" value="1"/>
</dbReference>
<dbReference type="FunFam" id="3.30.200.20:FF:000236">
    <property type="entry name" value="Non-specific serine/threonine protein kinase"/>
    <property type="match status" value="1"/>
</dbReference>
<dbReference type="Gene3D" id="1.10.8.10">
    <property type="entry name" value="DNA helicase RuvA subunit, C-terminal domain"/>
    <property type="match status" value="1"/>
</dbReference>
<dbReference type="Gene3D" id="3.30.310.80">
    <property type="entry name" value="Kinase associated domain 1, KA1"/>
    <property type="match status" value="1"/>
</dbReference>
<dbReference type="Gene3D" id="3.30.200.20">
    <property type="entry name" value="Phosphorylase Kinase, domain 1"/>
    <property type="match status" value="1"/>
</dbReference>
<dbReference type="Gene3D" id="1.10.510.10">
    <property type="entry name" value="Transferase(Phosphotransferase) domain 1"/>
    <property type="match status" value="1"/>
</dbReference>
<dbReference type="InterPro" id="IPR032270">
    <property type="entry name" value="AMPK_C"/>
</dbReference>
<dbReference type="InterPro" id="IPR028375">
    <property type="entry name" value="KA1/Ssp2_C"/>
</dbReference>
<dbReference type="InterPro" id="IPR011009">
    <property type="entry name" value="Kinase-like_dom_sf"/>
</dbReference>
<dbReference type="InterPro" id="IPR000719">
    <property type="entry name" value="Prot_kinase_dom"/>
</dbReference>
<dbReference type="InterPro" id="IPR017441">
    <property type="entry name" value="Protein_kinase_ATP_BS"/>
</dbReference>
<dbReference type="InterPro" id="IPR008271">
    <property type="entry name" value="Ser/Thr_kinase_AS"/>
</dbReference>
<dbReference type="InterPro" id="IPR013896">
    <property type="entry name" value="SNF1_UBA"/>
</dbReference>
<dbReference type="PANTHER" id="PTHR24346">
    <property type="entry name" value="MAP/MICROTUBULE AFFINITY-REGULATING KINASE"/>
    <property type="match status" value="1"/>
</dbReference>
<dbReference type="PANTHER" id="PTHR24346:SF110">
    <property type="entry name" value="NON-SPECIFIC SERINE_THREONINE PROTEIN KINASE"/>
    <property type="match status" value="1"/>
</dbReference>
<dbReference type="Pfam" id="PF16579">
    <property type="entry name" value="AdenylateSensor"/>
    <property type="match status" value="1"/>
</dbReference>
<dbReference type="Pfam" id="PF00069">
    <property type="entry name" value="Pkinase"/>
    <property type="match status" value="1"/>
</dbReference>
<dbReference type="Pfam" id="PF08587">
    <property type="entry name" value="UBA_2"/>
    <property type="match status" value="1"/>
</dbReference>
<dbReference type="SMART" id="SM00220">
    <property type="entry name" value="S_TKc"/>
    <property type="match status" value="1"/>
</dbReference>
<dbReference type="SUPFAM" id="SSF103243">
    <property type="entry name" value="KA1-like"/>
    <property type="match status" value="1"/>
</dbReference>
<dbReference type="SUPFAM" id="SSF56112">
    <property type="entry name" value="Protein kinase-like (PK-like)"/>
    <property type="match status" value="1"/>
</dbReference>
<dbReference type="PROSITE" id="PS00107">
    <property type="entry name" value="PROTEIN_KINASE_ATP"/>
    <property type="match status" value="1"/>
</dbReference>
<dbReference type="PROSITE" id="PS50011">
    <property type="entry name" value="PROTEIN_KINASE_DOM"/>
    <property type="match status" value="1"/>
</dbReference>
<dbReference type="PROSITE" id="PS00108">
    <property type="entry name" value="PROTEIN_KINASE_ST"/>
    <property type="match status" value="1"/>
</dbReference>
<gene>
    <name evidence="5" type="primary">SNF1</name>
    <name type="ORF">g3696</name>
</gene>
<name>SNF1_FUSVI</name>
<sequence>MAPRGFEDEELTISLSSSHVRRPQQQQPPPPTQQQHAHQPGSRPADAPLKERIKTEQRIGAYKVLRTLGEGSFGKVKLAIHNGTGQQVALKIIARKKLISRDMAGRVEREIEYLQLLRHPHIIKLYTVIKTPNEIIMVLEYAGGELFDYIVQHGRMKEAEARRFFQQMLCAVEYCHRHKIVHRDLKPENLLLDENLNVKIADFGLSNIMTDGNFLKTSCGSPNYAAPEVIGGKLYAGPEVDVWSCGVILYVLLVGRLPFDDEHIPSLFAKIAKGTYSIPQWMPLGAANLIKKMLVVNPVHRATIEDIRADPWFTTELPVYLQLPVEEFFNTGVDPNKAIQKNDIAPNAPEKVQERLHNEVTEKISKTMGYGKNDVEEALQASEPSAIKDAYMIVRENKMMQVNQHPEALLEPEGSSPMLSMSSARSATSTTTTTAPRPYVSKVGILPSSLPAYHKDYVEREKAGSVNNSPPQVLINDELPVTRTDAEKEETSRRLRPHSRSQLRLDEANTRPQGMTPINPPKKTKPVRWQFGIRSRNSPWEALLCIHKALHKLGATYIPDEDYESRHAEERAEASGNGSFADSYDGSRGSTTSIDPMKRYRLPADPWHINVRWDTSAIKKKLQGSADTPDKRQAHEPFVALHLDIQIYEMEHGVYLVDFKCSGYETATGRLLEEKEVTSPFPFLDMAAKLIMQLAEAD</sequence>
<protein>
    <recommendedName>
        <fullName evidence="5">Sucrose non-fermenting protein kinase 1</fullName>
        <ecNumber evidence="1">2.7.11.1</ecNumber>
    </recommendedName>
</protein>